<dbReference type="EMBL" id="AK000268">
    <property type="protein sequence ID" value="BAA91044.1"/>
    <property type="molecule type" value="mRNA"/>
</dbReference>
<dbReference type="EMBL" id="BC111968">
    <property type="protein sequence ID" value="AAI11969.1"/>
    <property type="molecule type" value="mRNA"/>
</dbReference>
<dbReference type="CCDS" id="CCDS11372.1"/>
<dbReference type="RefSeq" id="NP_061889.2">
    <property type="nucleotide sequence ID" value="NM_019016.3"/>
</dbReference>
<dbReference type="SMR" id="Q2M2I5"/>
<dbReference type="BioGRID" id="128175">
    <property type="interactions" value="53"/>
</dbReference>
<dbReference type="FunCoup" id="Q2M2I5">
    <property type="interactions" value="142"/>
</dbReference>
<dbReference type="IntAct" id="Q2M2I5">
    <property type="interactions" value="48"/>
</dbReference>
<dbReference type="STRING" id="9606.ENSP00000264651"/>
<dbReference type="iPTMnet" id="Q2M2I5"/>
<dbReference type="PhosphoSitePlus" id="Q2M2I5"/>
<dbReference type="BioMuta" id="KRT24"/>
<dbReference type="DMDM" id="121941436"/>
<dbReference type="jPOST" id="Q2M2I5"/>
<dbReference type="MassIVE" id="Q2M2I5"/>
<dbReference type="PaxDb" id="9606-ENSP00000264651"/>
<dbReference type="PeptideAtlas" id="Q2M2I5"/>
<dbReference type="ProteomicsDB" id="61354"/>
<dbReference type="Antibodypedia" id="16540">
    <property type="antibodies" value="220 antibodies from 14 providers"/>
</dbReference>
<dbReference type="DNASU" id="192666"/>
<dbReference type="Ensembl" id="ENST00000264651.3">
    <property type="protein sequence ID" value="ENSP00000264651.2"/>
    <property type="gene ID" value="ENSG00000167916.5"/>
</dbReference>
<dbReference type="GeneID" id="192666"/>
<dbReference type="KEGG" id="hsa:192666"/>
<dbReference type="MANE-Select" id="ENST00000264651.3">
    <property type="protein sequence ID" value="ENSP00000264651.2"/>
    <property type="RefSeq nucleotide sequence ID" value="NM_019016.3"/>
    <property type="RefSeq protein sequence ID" value="NP_061889.2"/>
</dbReference>
<dbReference type="UCSC" id="uc002hvd.3">
    <property type="organism name" value="human"/>
</dbReference>
<dbReference type="AGR" id="HGNC:18527"/>
<dbReference type="CTD" id="192666"/>
<dbReference type="DisGeNET" id="192666"/>
<dbReference type="GeneCards" id="KRT24"/>
<dbReference type="HGNC" id="HGNC:18527">
    <property type="gene designation" value="KRT24"/>
</dbReference>
<dbReference type="HPA" id="ENSG00000167916">
    <property type="expression patterns" value="Group enriched (esophagus, lymphoid tissue)"/>
</dbReference>
<dbReference type="MIM" id="607742">
    <property type="type" value="gene"/>
</dbReference>
<dbReference type="neXtProt" id="NX_Q2M2I5"/>
<dbReference type="OpenTargets" id="ENSG00000167916"/>
<dbReference type="PharmGKB" id="PA38344"/>
<dbReference type="VEuPathDB" id="HostDB:ENSG00000167916"/>
<dbReference type="eggNOG" id="ENOG502QTM6">
    <property type="taxonomic scope" value="Eukaryota"/>
</dbReference>
<dbReference type="GeneTree" id="ENSGT00940000161783"/>
<dbReference type="HOGENOM" id="CLU_012560_8_3_1"/>
<dbReference type="InParanoid" id="Q2M2I5"/>
<dbReference type="OMA" id="SGSTNMG"/>
<dbReference type="OrthoDB" id="2441647at2759"/>
<dbReference type="PAN-GO" id="Q2M2I5">
    <property type="GO annotations" value="1 GO annotation based on evolutionary models"/>
</dbReference>
<dbReference type="PhylomeDB" id="Q2M2I5"/>
<dbReference type="TreeFam" id="TF332742"/>
<dbReference type="PathwayCommons" id="Q2M2I5"/>
<dbReference type="Reactome" id="R-HSA-6805567">
    <property type="pathway name" value="Keratinization"/>
</dbReference>
<dbReference type="Reactome" id="R-HSA-6809371">
    <property type="pathway name" value="Formation of the cornified envelope"/>
</dbReference>
<dbReference type="Reactome" id="R-HSA-9725554">
    <property type="pathway name" value="Differentiation of Keratinocytes in Interfollicular Epidermis in Mammalian Skin"/>
</dbReference>
<dbReference type="SignaLink" id="Q2M2I5"/>
<dbReference type="BioGRID-ORCS" id="192666">
    <property type="hits" value="15 hits in 1149 CRISPR screens"/>
</dbReference>
<dbReference type="GenomeRNAi" id="192666"/>
<dbReference type="Pharos" id="Q2M2I5">
    <property type="development level" value="Tbio"/>
</dbReference>
<dbReference type="PRO" id="PR:Q2M2I5"/>
<dbReference type="Proteomes" id="UP000005640">
    <property type="component" value="Chromosome 17"/>
</dbReference>
<dbReference type="RNAct" id="Q2M2I5">
    <property type="molecule type" value="protein"/>
</dbReference>
<dbReference type="Bgee" id="ENSG00000167916">
    <property type="expression patterns" value="Expressed in amniotic fluid and 100 other cell types or tissues"/>
</dbReference>
<dbReference type="GO" id="GO:0005856">
    <property type="term" value="C:cytoskeleton"/>
    <property type="evidence" value="ECO:0000318"/>
    <property type="project" value="GO_Central"/>
</dbReference>
<dbReference type="GO" id="GO:0005829">
    <property type="term" value="C:cytosol"/>
    <property type="evidence" value="ECO:0000304"/>
    <property type="project" value="Reactome"/>
</dbReference>
<dbReference type="GO" id="GO:0070062">
    <property type="term" value="C:extracellular exosome"/>
    <property type="evidence" value="ECO:0007005"/>
    <property type="project" value="UniProtKB"/>
</dbReference>
<dbReference type="GO" id="GO:0005882">
    <property type="term" value="C:intermediate filament"/>
    <property type="evidence" value="ECO:0007669"/>
    <property type="project" value="UniProtKB-KW"/>
</dbReference>
<dbReference type="GO" id="GO:0005198">
    <property type="term" value="F:structural molecule activity"/>
    <property type="evidence" value="ECO:0007669"/>
    <property type="project" value="InterPro"/>
</dbReference>
<dbReference type="GO" id="GO:0030855">
    <property type="term" value="P:epithelial cell differentiation"/>
    <property type="evidence" value="ECO:0000318"/>
    <property type="project" value="GO_Central"/>
</dbReference>
<dbReference type="GO" id="GO:0045109">
    <property type="term" value="P:intermediate filament organization"/>
    <property type="evidence" value="ECO:0000318"/>
    <property type="project" value="GO_Central"/>
</dbReference>
<dbReference type="FunFam" id="1.20.5.1160:FF:000002">
    <property type="entry name" value="Type I keratin 10"/>
    <property type="match status" value="1"/>
</dbReference>
<dbReference type="FunFam" id="1.20.5.170:FF:000002">
    <property type="entry name" value="Type I keratin KA11"/>
    <property type="match status" value="1"/>
</dbReference>
<dbReference type="FunFam" id="1.20.5.500:FF:000001">
    <property type="entry name" value="Type II keratin 23"/>
    <property type="match status" value="1"/>
</dbReference>
<dbReference type="Gene3D" id="1.20.5.170">
    <property type="match status" value="1"/>
</dbReference>
<dbReference type="Gene3D" id="1.20.5.500">
    <property type="entry name" value="Single helix bin"/>
    <property type="match status" value="1"/>
</dbReference>
<dbReference type="Gene3D" id="1.20.5.1160">
    <property type="entry name" value="Vasodilator-stimulated phosphoprotein"/>
    <property type="match status" value="1"/>
</dbReference>
<dbReference type="InterPro" id="IPR018039">
    <property type="entry name" value="IF_conserved"/>
</dbReference>
<dbReference type="InterPro" id="IPR039008">
    <property type="entry name" value="IF_rod_dom"/>
</dbReference>
<dbReference type="InterPro" id="IPR002957">
    <property type="entry name" value="Keratin_I"/>
</dbReference>
<dbReference type="PANTHER" id="PTHR23239">
    <property type="entry name" value="INTERMEDIATE FILAMENT"/>
    <property type="match status" value="1"/>
</dbReference>
<dbReference type="PANTHER" id="PTHR23239:SF207">
    <property type="entry name" value="KERATIN, TYPE I CYTOSKELETAL 24"/>
    <property type="match status" value="1"/>
</dbReference>
<dbReference type="Pfam" id="PF00038">
    <property type="entry name" value="Filament"/>
    <property type="match status" value="1"/>
</dbReference>
<dbReference type="PRINTS" id="PR01248">
    <property type="entry name" value="TYPE1KERATIN"/>
</dbReference>
<dbReference type="SMART" id="SM01391">
    <property type="entry name" value="Filament"/>
    <property type="match status" value="1"/>
</dbReference>
<dbReference type="SUPFAM" id="SSF64593">
    <property type="entry name" value="Intermediate filament protein, coiled coil region"/>
    <property type="match status" value="2"/>
</dbReference>
<dbReference type="SUPFAM" id="SSF46579">
    <property type="entry name" value="Prefoldin"/>
    <property type="match status" value="1"/>
</dbReference>
<dbReference type="PROSITE" id="PS00226">
    <property type="entry name" value="IF_ROD_1"/>
    <property type="match status" value="1"/>
</dbReference>
<dbReference type="PROSITE" id="PS51842">
    <property type="entry name" value="IF_ROD_2"/>
    <property type="match status" value="1"/>
</dbReference>
<sequence>MSCSSRASSSRAGGSSSARVSAGGSSFSSGSRCGLGGSSAQGFRGGASSCSLSGGSSGAFGGSFGGGFGSCSVGGGFGGASGSGTGFGGGSSFGGVSGFGRGSGFCGSSRFSSGATGGFYSYGGGMGGGVGDGGLFSGGEKQTMQNLNDRLANYLDKVRALEEANTDLENKIKEWYDKYGPGSGDGGSGRDYSKYYSIIEDLRNQIIAATVENAGIILHIDNARLAADDFRLKYENELCLRQSVEADINGLRKVLDDLTMTRSDLEMQIESFTEELAYLRKNHEEEMKNMQGSSGGEVTVEMNAAPGTDLTKLLNDMRAQYEELAEQNRREAEERFNKQSASLQAQISTDAGAATSAKNEITELKRTLQALEIELQSQLAMKSSLEGTLADTEAGYVAQLSEIQTQISALEEEICQIWGETKCQNAEYKQLLDIKTRLEVEIETYRRLLDGEGGGSSFAEFGGRNSGSVNMGSRDLVSGDSRSGSCSGQGRDSSKTRVTKTIVEELVDGKVVSSQVSSISEVKVK</sequence>
<organism>
    <name type="scientific">Homo sapiens</name>
    <name type="common">Human</name>
    <dbReference type="NCBI Taxonomy" id="9606"/>
    <lineage>
        <taxon>Eukaryota</taxon>
        <taxon>Metazoa</taxon>
        <taxon>Chordata</taxon>
        <taxon>Craniata</taxon>
        <taxon>Vertebrata</taxon>
        <taxon>Euteleostomi</taxon>
        <taxon>Mammalia</taxon>
        <taxon>Eutheria</taxon>
        <taxon>Euarchontoglires</taxon>
        <taxon>Primates</taxon>
        <taxon>Haplorrhini</taxon>
        <taxon>Catarrhini</taxon>
        <taxon>Hominidae</taxon>
        <taxon>Homo</taxon>
    </lineage>
</organism>
<evidence type="ECO:0000255" key="1">
    <source>
        <dbReference type="PROSITE-ProRule" id="PRU01188"/>
    </source>
</evidence>
<evidence type="ECO:0000256" key="2">
    <source>
        <dbReference type="SAM" id="MobiDB-lite"/>
    </source>
</evidence>
<evidence type="ECO:0000269" key="3">
    <source>
    </source>
</evidence>
<evidence type="ECO:0000269" key="4">
    <source>
    </source>
</evidence>
<evidence type="ECO:0000305" key="5"/>
<gene>
    <name type="primary">KRT24</name>
    <name type="synonym">KA24</name>
</gene>
<comment type="subunit">
    <text>Heterotetramer of two type I and two type II keratins.</text>
</comment>
<comment type="interaction">
    <interactant intactId="EBI-2952736">
        <id>Q2M2I5</id>
    </interactant>
    <interactant intactId="EBI-5463075">
        <id>Q4LEZ3</id>
        <label>AARD</label>
    </interactant>
    <organismsDiffer>false</organismsDiffer>
    <experiments>3</experiments>
</comment>
<comment type="interaction">
    <interactant intactId="EBI-2952736">
        <id>Q2M2I5</id>
    </interactant>
    <interactant intactId="EBI-11096309">
        <id>Q9NYB9-2</id>
        <label>ABI2</label>
    </interactant>
    <organismsDiffer>false</organismsDiffer>
    <experiments>3</experiments>
</comment>
<comment type="interaction">
    <interactant intactId="EBI-2952736">
        <id>Q2M2I5</id>
    </interactant>
    <interactant intactId="EBI-742038">
        <id>Q9P2A4</id>
        <label>ABI3</label>
    </interactant>
    <organismsDiffer>false</organismsDiffer>
    <experiments>3</experiments>
</comment>
<comment type="interaction">
    <interactant intactId="EBI-2952736">
        <id>Q2M2I5</id>
    </interactant>
    <interactant intactId="EBI-8643161">
        <id>Q9NX04</id>
        <label>AIRIM</label>
    </interactant>
    <organismsDiffer>false</organismsDiffer>
    <experiments>3</experiments>
</comment>
<comment type="interaction">
    <interactant intactId="EBI-2952736">
        <id>Q2M2I5</id>
    </interactant>
    <interactant intactId="EBI-17286414">
        <id>A2BDD9</id>
        <label>AMOT</label>
    </interactant>
    <organismsDiffer>false</organismsDiffer>
    <experiments>3</experiments>
</comment>
<comment type="interaction">
    <interactant intactId="EBI-2952736">
        <id>Q2M2I5</id>
    </interactant>
    <interactant intactId="EBI-10229433">
        <id>Q13515</id>
        <label>BFSP2</label>
    </interactant>
    <organismsDiffer>false</organismsDiffer>
    <experiments>3</experiments>
</comment>
<comment type="interaction">
    <interactant intactId="EBI-2952736">
        <id>Q2M2I5</id>
    </interactant>
    <interactant intactId="EBI-747505">
        <id>Q8TAB5</id>
        <label>C1orf216</label>
    </interactant>
    <organismsDiffer>false</organismsDiffer>
    <experiments>5</experiments>
</comment>
<comment type="interaction">
    <interactant intactId="EBI-2952736">
        <id>Q2M2I5</id>
    </interactant>
    <interactant intactId="EBI-10749669">
        <id>Q8IYE0</id>
        <label>CCDC146</label>
    </interactant>
    <organismsDiffer>false</organismsDiffer>
    <experiments>3</experiments>
</comment>
<comment type="interaction">
    <interactant intactId="EBI-2952736">
        <id>Q2M2I5</id>
    </interactant>
    <interactant intactId="EBI-10175300">
        <id>Q8TD31-3</id>
        <label>CCHCR1</label>
    </interactant>
    <organismsDiffer>false</organismsDiffer>
    <experiments>3</experiments>
</comment>
<comment type="interaction">
    <interactant intactId="EBI-2952736">
        <id>Q2M2I5</id>
    </interactant>
    <interactant intactId="EBI-740220">
        <id>O14964</id>
        <label>HGS</label>
    </interactant>
    <organismsDiffer>false</organismsDiffer>
    <experiments>3</experiments>
</comment>
<comment type="interaction">
    <interactant intactId="EBI-2952736">
        <id>Q2M2I5</id>
    </interactant>
    <interactant intactId="EBI-298429">
        <id>P04264</id>
        <label>KRT1</label>
    </interactant>
    <organismsDiffer>false</organismsDiffer>
    <experiments>3</experiments>
</comment>
<comment type="interaction">
    <interactant intactId="EBI-2952736">
        <id>Q2M2I5</id>
    </interactant>
    <interactant intactId="EBI-742094">
        <id>P35900</id>
        <label>KRT20</label>
    </interactant>
    <organismsDiffer>false</organismsDiffer>
    <experiments>3</experiments>
</comment>
<comment type="interaction">
    <interactant intactId="EBI-2952736">
        <id>Q2M2I5</id>
    </interactant>
    <interactant intactId="EBI-2430095">
        <id>P12035</id>
        <label>KRT3</label>
    </interactant>
    <organismsDiffer>false</organismsDiffer>
    <experiments>3</experiments>
</comment>
<comment type="interaction">
    <interactant intactId="EBI-2952736">
        <id>Q2M2I5</id>
    </interactant>
    <interactant intactId="EBI-2371606">
        <id>P19013</id>
        <label>KRT4</label>
    </interactant>
    <organismsDiffer>false</organismsDiffer>
    <experiments>3</experiments>
</comment>
<comment type="interaction">
    <interactant intactId="EBI-2952736">
        <id>Q2M2I5</id>
    </interactant>
    <interactant intactId="EBI-702187">
        <id>P13647</id>
        <label>KRT5</label>
    </interactant>
    <organismsDiffer>false</organismsDiffer>
    <experiments>3</experiments>
</comment>
<comment type="interaction">
    <interactant intactId="EBI-2952736">
        <id>Q2M2I5</id>
    </interactant>
    <interactant intactId="EBI-2564105">
        <id>P48668</id>
        <label>KRT6C</label>
    </interactant>
    <organismsDiffer>false</organismsDiffer>
    <experiments>3</experiments>
</comment>
<comment type="interaction">
    <interactant intactId="EBI-2952736">
        <id>Q2M2I5</id>
    </interactant>
    <interactant intactId="EBI-2952676">
        <id>Q3SY84</id>
        <label>KRT71</label>
    </interactant>
    <organismsDiffer>false</organismsDiffer>
    <experiments>5</experiments>
</comment>
<comment type="interaction">
    <interactant intactId="EBI-2952736">
        <id>Q2M2I5</id>
    </interactant>
    <interactant intactId="EBI-1221280">
        <id>Q14CN4</id>
        <label>KRT72</label>
    </interactant>
    <organismsDiffer>false</organismsDiffer>
    <experiments>3</experiments>
</comment>
<comment type="interaction">
    <interactant intactId="EBI-2952736">
        <id>Q2M2I5</id>
    </interactant>
    <interactant intactId="EBI-2949715">
        <id>O95678</id>
        <label>KRT75</label>
    </interactant>
    <organismsDiffer>false</organismsDiffer>
    <experiments>3</experiments>
</comment>
<comment type="interaction">
    <interactant intactId="EBI-2952736">
        <id>Q2M2I5</id>
    </interactant>
    <interactant intactId="EBI-2514135">
        <id>Q5XKE5</id>
        <label>KRT79</label>
    </interactant>
    <organismsDiffer>false</organismsDiffer>
    <experiments>3</experiments>
</comment>
<comment type="interaction">
    <interactant intactId="EBI-2952736">
        <id>Q2M2I5</id>
    </interactant>
    <interactant intactId="EBI-297852">
        <id>P05787</id>
        <label>KRT8</label>
    </interactant>
    <organismsDiffer>false</organismsDiffer>
    <experiments>3</experiments>
</comment>
<comment type="interaction">
    <interactant intactId="EBI-2952736">
        <id>Q2M2I5</id>
    </interactant>
    <interactant intactId="EBI-11999246">
        <id>Q6KB66-2</id>
        <label>KRT80</label>
    </interactant>
    <organismsDiffer>false</organismsDiffer>
    <experiments>5</experiments>
</comment>
<comment type="interaction">
    <interactant intactId="EBI-2952736">
        <id>Q2M2I5</id>
    </interactant>
    <interactant intactId="EBI-8466445">
        <id>A5D8V7</id>
        <label>ODAD3</label>
    </interactant>
    <organismsDiffer>false</organismsDiffer>
    <experiments>3</experiments>
</comment>
<comment type="interaction">
    <interactant intactId="EBI-2952736">
        <id>Q2M2I5</id>
    </interactant>
    <interactant intactId="EBI-752074">
        <id>P41219</id>
        <label>PRPH</label>
    </interactant>
    <organismsDiffer>false</organismsDiffer>
    <experiments>3</experiments>
</comment>
<comment type="interaction">
    <interactant intactId="EBI-2952736">
        <id>Q2M2I5</id>
    </interactant>
    <interactant intactId="EBI-1504830">
        <id>Q9P2K3-2</id>
        <label>RCOR3</label>
    </interactant>
    <organismsDiffer>false</organismsDiffer>
    <experiments>3</experiments>
</comment>
<comment type="interaction">
    <interactant intactId="EBI-2952736">
        <id>Q2M2I5</id>
    </interactant>
    <interactant intactId="EBI-743117">
        <id>Q96ES7</id>
        <label>SGF29</label>
    </interactant>
    <organismsDiffer>false</organismsDiffer>
    <experiments>3</experiments>
</comment>
<comment type="interaction">
    <interactant intactId="EBI-2952736">
        <id>Q2M2I5</id>
    </interactant>
    <interactant intactId="EBI-296723">
        <id>O95295</id>
        <label>SNAPIN</label>
    </interactant>
    <organismsDiffer>false</organismsDiffer>
    <experiments>6</experiments>
</comment>
<comment type="interaction">
    <interactant intactId="EBI-2952736">
        <id>Q2M2I5</id>
    </interactant>
    <interactant intactId="EBI-740781">
        <id>Q9BT92</id>
        <label>TCHP</label>
    </interactant>
    <organismsDiffer>false</organismsDiffer>
    <experiments>3</experiments>
</comment>
<comment type="interaction">
    <interactant intactId="EBI-2952736">
        <id>Q2M2I5</id>
    </interactant>
    <interactant intactId="EBI-11059915">
        <id>Q8N7C3</id>
        <label>TRIML2</label>
    </interactant>
    <organismsDiffer>false</organismsDiffer>
    <experiments>3</experiments>
</comment>
<comment type="interaction">
    <interactant intactId="EBI-2952736">
        <id>Q2M2I5</id>
    </interactant>
    <interactant intactId="EBI-10241197">
        <id>Q3SY00</id>
        <label>TSGA10IP</label>
    </interactant>
    <organismsDiffer>false</organismsDiffer>
    <experiments>3</experiments>
</comment>
<comment type="interaction">
    <interactant intactId="EBI-2952736">
        <id>Q2M2I5</id>
    </interactant>
    <interactant intactId="EBI-359793">
        <id>P40222</id>
        <label>TXLNA</label>
    </interactant>
    <organismsDiffer>false</organismsDiffer>
    <experiments>3</experiments>
</comment>
<comment type="tissue specificity">
    <text evidence="3">Highly expressed in keratinocytes, placenta, colon and spleen. Expressed at lower level in thymus and testis.</text>
</comment>
<comment type="induction">
    <text evidence="4">Up-regulated in the mucosa of patients suffering of colorectal cancer.</text>
</comment>
<comment type="miscellaneous">
    <text>There are two types of cytoskeletal and microfibrillar keratin, I (acidic) and II (neutral to basic) (40-55 and 56-70 kDa, respectively).</text>
</comment>
<comment type="similarity">
    <text evidence="1">Belongs to the intermediate filament family.</text>
</comment>
<name>K1C24_HUMAN</name>
<accession>Q2M2I5</accession>
<accession>Q9NXG7</accession>
<feature type="chain" id="PRO_0000314850" description="Keratin, type I cytoskeletal 24">
    <location>
        <begin position="1"/>
        <end position="525"/>
    </location>
</feature>
<feature type="domain" description="IF rod" evidence="1">
    <location>
        <begin position="140"/>
        <end position="456"/>
    </location>
</feature>
<feature type="region of interest" description="Head">
    <location>
        <begin position="1"/>
        <end position="139"/>
    </location>
</feature>
<feature type="region of interest" description="Disordered" evidence="2">
    <location>
        <begin position="1"/>
        <end position="30"/>
    </location>
</feature>
<feature type="region of interest" description="Coil 1A">
    <location>
        <begin position="140"/>
        <end position="175"/>
    </location>
</feature>
<feature type="region of interest" description="Linker 1">
    <location>
        <begin position="176"/>
        <end position="198"/>
    </location>
</feature>
<feature type="region of interest" description="Coil 1B">
    <location>
        <begin position="199"/>
        <end position="290"/>
    </location>
</feature>
<feature type="region of interest" description="Linker 12">
    <location>
        <begin position="291"/>
        <end position="313"/>
    </location>
</feature>
<feature type="region of interest" description="Coil 2">
    <location>
        <begin position="314"/>
        <end position="452"/>
    </location>
</feature>
<feature type="region of interest" description="Tail">
    <location>
        <begin position="453"/>
        <end position="525"/>
    </location>
</feature>
<feature type="region of interest" description="Disordered" evidence="2">
    <location>
        <begin position="459"/>
        <end position="497"/>
    </location>
</feature>
<feature type="compositionally biased region" description="Polar residues" evidence="2">
    <location>
        <begin position="480"/>
        <end position="491"/>
    </location>
</feature>
<feature type="sequence variant" id="VAR_038068" description="In dbSNP:rs9914185.">
    <original>A</original>
    <variation>T</variation>
    <location>
        <position position="115"/>
    </location>
</feature>
<feature type="sequence variant" id="VAR_038069" description="In dbSNP:rs7211480.">
    <original>G</original>
    <variation>D</variation>
    <location>
        <position position="250"/>
    </location>
</feature>
<feature type="sequence variant" id="VAR_038070" description="In dbSNP:rs874889.">
    <original>M</original>
    <variation>I</variation>
    <location>
        <position position="267"/>
    </location>
</feature>
<feature type="sequence variant" id="VAR_038071" description="In dbSNP:rs16966138.">
    <original>R</original>
    <variation>C</variation>
    <location>
        <position position="366"/>
    </location>
</feature>
<feature type="sequence variant" id="VAR_038072" description="In dbSNP:rs12945784.">
    <original>C</original>
    <variation>Y</variation>
    <location>
        <position position="415"/>
    </location>
</feature>
<feature type="sequence variant" id="VAR_038073" description="In dbSNP:rs12946793.">
    <original>W</original>
    <variation>R</variation>
    <location>
        <position position="418"/>
    </location>
</feature>
<feature type="sequence variant" id="VAR_038074" description="In dbSNP:rs2462961.">
    <original>K</original>
    <variation>E</variation>
    <location>
        <position position="429"/>
    </location>
</feature>
<feature type="sequence conflict" description="In Ref. 1; BAA91044." evidence="5" ref="1">
    <original>G</original>
    <variation>D</variation>
    <location>
        <position position="58"/>
    </location>
</feature>
<reference key="1">
    <citation type="journal article" date="2004" name="Nat. Genet.">
        <title>Complete sequencing and characterization of 21,243 full-length human cDNAs.</title>
        <authorList>
            <person name="Ota T."/>
            <person name="Suzuki Y."/>
            <person name="Nishikawa T."/>
            <person name="Otsuki T."/>
            <person name="Sugiyama T."/>
            <person name="Irie R."/>
            <person name="Wakamatsu A."/>
            <person name="Hayashi K."/>
            <person name="Sato H."/>
            <person name="Nagai K."/>
            <person name="Kimura K."/>
            <person name="Makita H."/>
            <person name="Sekine M."/>
            <person name="Obayashi M."/>
            <person name="Nishi T."/>
            <person name="Shibahara T."/>
            <person name="Tanaka T."/>
            <person name="Ishii S."/>
            <person name="Yamamoto J."/>
            <person name="Saito K."/>
            <person name="Kawai Y."/>
            <person name="Isono Y."/>
            <person name="Nakamura Y."/>
            <person name="Nagahari K."/>
            <person name="Murakami K."/>
            <person name="Yasuda T."/>
            <person name="Iwayanagi T."/>
            <person name="Wagatsuma M."/>
            <person name="Shiratori A."/>
            <person name="Sudo H."/>
            <person name="Hosoiri T."/>
            <person name="Kaku Y."/>
            <person name="Kodaira H."/>
            <person name="Kondo H."/>
            <person name="Sugawara M."/>
            <person name="Takahashi M."/>
            <person name="Kanda K."/>
            <person name="Yokoi T."/>
            <person name="Furuya T."/>
            <person name="Kikkawa E."/>
            <person name="Omura Y."/>
            <person name="Abe K."/>
            <person name="Kamihara K."/>
            <person name="Katsuta N."/>
            <person name="Sato K."/>
            <person name="Tanikawa M."/>
            <person name="Yamazaki M."/>
            <person name="Ninomiya K."/>
            <person name="Ishibashi T."/>
            <person name="Yamashita H."/>
            <person name="Murakawa K."/>
            <person name="Fujimori K."/>
            <person name="Tanai H."/>
            <person name="Kimata M."/>
            <person name="Watanabe M."/>
            <person name="Hiraoka S."/>
            <person name="Chiba Y."/>
            <person name="Ishida S."/>
            <person name="Ono Y."/>
            <person name="Takiguchi S."/>
            <person name="Watanabe S."/>
            <person name="Yosida M."/>
            <person name="Hotuta T."/>
            <person name="Kusano J."/>
            <person name="Kanehori K."/>
            <person name="Takahashi-Fujii A."/>
            <person name="Hara H."/>
            <person name="Tanase T.-O."/>
            <person name="Nomura Y."/>
            <person name="Togiya S."/>
            <person name="Komai F."/>
            <person name="Hara R."/>
            <person name="Takeuchi K."/>
            <person name="Arita M."/>
            <person name="Imose N."/>
            <person name="Musashino K."/>
            <person name="Yuuki H."/>
            <person name="Oshima A."/>
            <person name="Sasaki N."/>
            <person name="Aotsuka S."/>
            <person name="Yoshikawa Y."/>
            <person name="Matsunawa H."/>
            <person name="Ichihara T."/>
            <person name="Shiohata N."/>
            <person name="Sano S."/>
            <person name="Moriya S."/>
            <person name="Momiyama H."/>
            <person name="Satoh N."/>
            <person name="Takami S."/>
            <person name="Terashima Y."/>
            <person name="Suzuki O."/>
            <person name="Nakagawa S."/>
            <person name="Senoh A."/>
            <person name="Mizoguchi H."/>
            <person name="Goto Y."/>
            <person name="Shimizu F."/>
            <person name="Wakebe H."/>
            <person name="Hishigaki H."/>
            <person name="Watanabe T."/>
            <person name="Sugiyama A."/>
            <person name="Takemoto M."/>
            <person name="Kawakami B."/>
            <person name="Yamazaki M."/>
            <person name="Watanabe K."/>
            <person name="Kumagai A."/>
            <person name="Itakura S."/>
            <person name="Fukuzumi Y."/>
            <person name="Fujimori Y."/>
            <person name="Komiyama M."/>
            <person name="Tashiro H."/>
            <person name="Tanigami A."/>
            <person name="Fujiwara T."/>
            <person name="Ono T."/>
            <person name="Yamada K."/>
            <person name="Fujii Y."/>
            <person name="Ozaki K."/>
            <person name="Hirao M."/>
            <person name="Ohmori Y."/>
            <person name="Kawabata A."/>
            <person name="Hikiji T."/>
            <person name="Kobatake N."/>
            <person name="Inagaki H."/>
            <person name="Ikema Y."/>
            <person name="Okamoto S."/>
            <person name="Okitani R."/>
            <person name="Kawakami T."/>
            <person name="Noguchi S."/>
            <person name="Itoh T."/>
            <person name="Shigeta K."/>
            <person name="Senba T."/>
            <person name="Matsumura K."/>
            <person name="Nakajima Y."/>
            <person name="Mizuno T."/>
            <person name="Morinaga M."/>
            <person name="Sasaki M."/>
            <person name="Togashi T."/>
            <person name="Oyama M."/>
            <person name="Hata H."/>
            <person name="Watanabe M."/>
            <person name="Komatsu T."/>
            <person name="Mizushima-Sugano J."/>
            <person name="Satoh T."/>
            <person name="Shirai Y."/>
            <person name="Takahashi Y."/>
            <person name="Nakagawa K."/>
            <person name="Okumura K."/>
            <person name="Nagase T."/>
            <person name="Nomura N."/>
            <person name="Kikuchi H."/>
            <person name="Masuho Y."/>
            <person name="Yamashita R."/>
            <person name="Nakai K."/>
            <person name="Yada T."/>
            <person name="Nakamura Y."/>
            <person name="Ohara O."/>
            <person name="Isogai T."/>
            <person name="Sugano S."/>
        </authorList>
    </citation>
    <scope>NUCLEOTIDE SEQUENCE [LARGE SCALE MRNA]</scope>
    <source>
        <tissue>Colon mucosa</tissue>
    </source>
</reference>
<reference key="2">
    <citation type="journal article" date="2004" name="Genome Res.">
        <title>The status, quality, and expansion of the NIH full-length cDNA project: the Mammalian Gene Collection (MGC).</title>
        <authorList>
            <consortium name="The MGC Project Team"/>
        </authorList>
    </citation>
    <scope>NUCLEOTIDE SEQUENCE [LARGE SCALE MRNA]</scope>
</reference>
<reference key="3">
    <citation type="journal article" date="2002" name="J. Invest. Dermatol.">
        <title>Refined mapping of Naegeli-Franceschetti-Jadassohn syndrome to a 6 cM interval on chromosome 17q11.2-q21 and investigation of candidate genes.</title>
        <authorList>
            <person name="Sprecher E."/>
            <person name="Itin P."/>
            <person name="Whittock N.V."/>
            <person name="McGrath J.A."/>
            <person name="Meyer R."/>
            <person name="DiGiovanna J.J."/>
            <person name="Bale S.J."/>
            <person name="Uitto J."/>
            <person name="Richard G."/>
        </authorList>
    </citation>
    <scope>TISSUE SPECIFICITY</scope>
</reference>
<reference key="4">
    <citation type="journal article" date="2007" name="Clin. Cancer Res.">
        <title>A susceptibility gene set for early onset colorectal cancer that integrates diverse signaling pathways: implication for tumorigenesis.</title>
        <authorList>
            <person name="Hong Y."/>
            <person name="Ho K.S."/>
            <person name="Eu K.W."/>
            <person name="Cheah P.Y."/>
        </authorList>
    </citation>
    <scope>INDUCTION</scope>
</reference>
<reference key="5">
    <citation type="journal article" date="2011" name="BMC Syst. Biol.">
        <title>Initial characterization of the human central proteome.</title>
        <authorList>
            <person name="Burkard T.R."/>
            <person name="Planyavsky M."/>
            <person name="Kaupe I."/>
            <person name="Breitwieser F.P."/>
            <person name="Buerckstuemmer T."/>
            <person name="Bennett K.L."/>
            <person name="Superti-Furga G."/>
            <person name="Colinge J."/>
        </authorList>
    </citation>
    <scope>IDENTIFICATION BY MASS SPECTROMETRY [LARGE SCALE ANALYSIS]</scope>
</reference>
<keyword id="KW-0175">Coiled coil</keyword>
<keyword id="KW-0403">Intermediate filament</keyword>
<keyword id="KW-0416">Keratin</keyword>
<keyword id="KW-1267">Proteomics identification</keyword>
<keyword id="KW-1185">Reference proteome</keyword>
<proteinExistence type="evidence at protein level"/>
<protein>
    <recommendedName>
        <fullName>Keratin, type I cytoskeletal 24</fullName>
    </recommendedName>
    <alternativeName>
        <fullName>Cytokeratin-24</fullName>
        <shortName>CK-24</shortName>
    </alternativeName>
    <alternativeName>
        <fullName>Keratin-24</fullName>
        <shortName>K24</shortName>
    </alternativeName>
    <alternativeName>
        <fullName>Type I keratin-24</fullName>
    </alternativeName>
</protein>